<feature type="chain" id="PRO_0000076924" description="Galectin-2">
    <location>
        <begin position="1"/>
        <end position="132"/>
    </location>
</feature>
<feature type="domain" description="Galectin" evidence="2">
    <location>
        <begin position="4"/>
        <end position="131"/>
    </location>
</feature>
<feature type="binding site" evidence="1">
    <location>
        <begin position="65"/>
        <end position="71"/>
    </location>
    <ligand>
        <name>a beta-D-galactoside</name>
        <dbReference type="ChEBI" id="CHEBI:28034"/>
    </ligand>
</feature>
<feature type="sequence variant" id="VAR_049767" description="In dbSNP:rs2235339." evidence="4">
    <original>V</original>
    <variation>I</variation>
    <location>
        <position position="119"/>
    </location>
</feature>
<feature type="sequence variant" id="VAR_036570" description="In a breast cancer sample; somatic mutation; dbSNP:rs1434020843." evidence="3">
    <original>E</original>
    <variation>Q</variation>
    <location>
        <position position="132"/>
    </location>
</feature>
<feature type="strand" evidence="6">
    <location>
        <begin position="6"/>
        <end position="9"/>
    </location>
</feature>
<feature type="strand" evidence="6">
    <location>
        <begin position="17"/>
        <end position="24"/>
    </location>
</feature>
<feature type="strand" evidence="6">
    <location>
        <begin position="29"/>
        <end position="38"/>
    </location>
</feature>
<feature type="strand" evidence="6">
    <location>
        <begin position="41"/>
        <end position="49"/>
    </location>
</feature>
<feature type="turn" evidence="6">
    <location>
        <begin position="50"/>
        <end position="53"/>
    </location>
</feature>
<feature type="strand" evidence="6">
    <location>
        <begin position="54"/>
        <end position="61"/>
    </location>
</feature>
<feature type="strand" evidence="6">
    <location>
        <begin position="69"/>
        <end position="71"/>
    </location>
</feature>
<feature type="strand" evidence="6">
    <location>
        <begin position="81"/>
        <end position="88"/>
    </location>
</feature>
<feature type="strand" evidence="6">
    <location>
        <begin position="90"/>
        <end position="96"/>
    </location>
</feature>
<feature type="strand" evidence="5">
    <location>
        <begin position="98"/>
        <end position="100"/>
    </location>
</feature>
<feature type="strand" evidence="6">
    <location>
        <begin position="102"/>
        <end position="106"/>
    </location>
</feature>
<feature type="strand" evidence="6">
    <location>
        <begin position="116"/>
        <end position="131"/>
    </location>
</feature>
<accession>P05162</accession>
<accession>Q6FGY4</accession>
<name>LEG2_HUMAN</name>
<evidence type="ECO:0000255" key="1"/>
<evidence type="ECO:0000255" key="2">
    <source>
        <dbReference type="PROSITE-ProRule" id="PRU00639"/>
    </source>
</evidence>
<evidence type="ECO:0000269" key="3">
    <source>
    </source>
</evidence>
<evidence type="ECO:0000269" key="4">
    <source>
    </source>
</evidence>
<evidence type="ECO:0007829" key="5">
    <source>
        <dbReference type="PDB" id="5DG1"/>
    </source>
</evidence>
<evidence type="ECO:0007829" key="6">
    <source>
        <dbReference type="PDB" id="5DG2"/>
    </source>
</evidence>
<keyword id="KW-0002">3D-structure</keyword>
<keyword id="KW-0430">Lectin</keyword>
<keyword id="KW-1267">Proteomics identification</keyword>
<keyword id="KW-1185">Reference proteome</keyword>
<proteinExistence type="evidence at protein level"/>
<dbReference type="EMBL" id="M87860">
    <property type="protein sequence ID" value="AAA59512.1"/>
    <property type="molecule type" value="Genomic_DNA"/>
</dbReference>
<dbReference type="EMBL" id="M87857">
    <property type="protein sequence ID" value="AAA59512.1"/>
    <property type="status" value="JOINED"/>
    <property type="molecule type" value="Genomic_DNA"/>
</dbReference>
<dbReference type="EMBL" id="M87858">
    <property type="protein sequence ID" value="AAA59512.1"/>
    <property type="status" value="JOINED"/>
    <property type="molecule type" value="Genomic_DNA"/>
</dbReference>
<dbReference type="EMBL" id="M87859">
    <property type="protein sequence ID" value="AAA59512.1"/>
    <property type="status" value="JOINED"/>
    <property type="molecule type" value="Genomic_DNA"/>
</dbReference>
<dbReference type="EMBL" id="M87842">
    <property type="protein sequence ID" value="AAA59513.1"/>
    <property type="molecule type" value="mRNA"/>
</dbReference>
<dbReference type="EMBL" id="CR456512">
    <property type="protein sequence ID" value="CAG30398.1"/>
    <property type="molecule type" value="mRNA"/>
</dbReference>
<dbReference type="EMBL" id="CR541972">
    <property type="protein sequence ID" value="CAG46770.1"/>
    <property type="molecule type" value="mRNA"/>
</dbReference>
<dbReference type="EMBL" id="CR542000">
    <property type="protein sequence ID" value="CAG46797.1"/>
    <property type="molecule type" value="mRNA"/>
</dbReference>
<dbReference type="EMBL" id="AL022315">
    <property type="status" value="NOT_ANNOTATED_CDS"/>
    <property type="molecule type" value="Genomic_DNA"/>
</dbReference>
<dbReference type="EMBL" id="CH471095">
    <property type="protein sequence ID" value="EAW60167.1"/>
    <property type="molecule type" value="Genomic_DNA"/>
</dbReference>
<dbReference type="EMBL" id="BC059782">
    <property type="protein sequence ID" value="AAH59782.1"/>
    <property type="molecule type" value="mRNA"/>
</dbReference>
<dbReference type="EMBL" id="M14079">
    <property type="protein sequence ID" value="AAA36171.1"/>
    <property type="molecule type" value="mRNA"/>
</dbReference>
<dbReference type="CCDS" id="CCDS13950.1"/>
<dbReference type="PIR" id="A38140">
    <property type="entry name" value="A38140"/>
</dbReference>
<dbReference type="RefSeq" id="NP_006489.1">
    <property type="nucleotide sequence ID" value="NM_006498.3"/>
</dbReference>
<dbReference type="PDB" id="1HLC">
    <property type="method" value="X-ray"/>
    <property type="resolution" value="2.90 A"/>
    <property type="chains" value="A/B=4-132"/>
</dbReference>
<dbReference type="PDB" id="5DG1">
    <property type="method" value="X-ray"/>
    <property type="resolution" value="3.20 A"/>
    <property type="chains" value="A/B/C/D/H/I=1-132"/>
</dbReference>
<dbReference type="PDB" id="5DG2">
    <property type="method" value="X-ray"/>
    <property type="resolution" value="1.61 A"/>
    <property type="chains" value="A/B=1-132"/>
</dbReference>
<dbReference type="PDB" id="5EWS">
    <property type="method" value="X-ray"/>
    <property type="resolution" value="2.00 A"/>
    <property type="chains" value="A/B/C/D/E/F/G/H/I/J/K/L/M/N/O/P=1-131"/>
</dbReference>
<dbReference type="PDBsum" id="1HLC"/>
<dbReference type="PDBsum" id="5DG1"/>
<dbReference type="PDBsum" id="5DG2"/>
<dbReference type="PDBsum" id="5EWS"/>
<dbReference type="SMR" id="P05162"/>
<dbReference type="BioGRID" id="110148">
    <property type="interactions" value="11"/>
</dbReference>
<dbReference type="ComplexPortal" id="CPX-95">
    <property type="entry name" value="Galectin-2 complex"/>
</dbReference>
<dbReference type="FunCoup" id="P05162">
    <property type="interactions" value="14"/>
</dbReference>
<dbReference type="IntAct" id="P05162">
    <property type="interactions" value="5"/>
</dbReference>
<dbReference type="MINT" id="P05162"/>
<dbReference type="STRING" id="9606.ENSP00000215886"/>
<dbReference type="BindingDB" id="P05162"/>
<dbReference type="ChEMBL" id="CHEMBL5977"/>
<dbReference type="DrugBank" id="DB02379">
    <property type="generic name" value="Beta-D-Glucose"/>
</dbReference>
<dbReference type="UniLectin" id="P05162"/>
<dbReference type="GlyGen" id="P05162">
    <property type="glycosylation" value="2 sites"/>
</dbReference>
<dbReference type="iPTMnet" id="P05162"/>
<dbReference type="PhosphoSitePlus" id="P05162"/>
<dbReference type="BioMuta" id="LGALS2"/>
<dbReference type="DMDM" id="585388"/>
<dbReference type="jPOST" id="P05162"/>
<dbReference type="MassIVE" id="P05162"/>
<dbReference type="PaxDb" id="9606-ENSP00000215886"/>
<dbReference type="PeptideAtlas" id="P05162"/>
<dbReference type="ProteomicsDB" id="51810"/>
<dbReference type="Antibodypedia" id="286">
    <property type="antibodies" value="315 antibodies from 32 providers"/>
</dbReference>
<dbReference type="DNASU" id="3957"/>
<dbReference type="Ensembl" id="ENST00000215886.6">
    <property type="protein sequence ID" value="ENSP00000215886.4"/>
    <property type="gene ID" value="ENSG00000100079.7"/>
</dbReference>
<dbReference type="GeneID" id="3957"/>
<dbReference type="KEGG" id="hsa:3957"/>
<dbReference type="MANE-Select" id="ENST00000215886.6">
    <property type="protein sequence ID" value="ENSP00000215886.4"/>
    <property type="RefSeq nucleotide sequence ID" value="NM_006498.3"/>
    <property type="RefSeq protein sequence ID" value="NP_006489.1"/>
</dbReference>
<dbReference type="UCSC" id="uc003ata.4">
    <property type="organism name" value="human"/>
</dbReference>
<dbReference type="AGR" id="HGNC:6562"/>
<dbReference type="CTD" id="3957"/>
<dbReference type="DisGeNET" id="3957"/>
<dbReference type="GeneCards" id="LGALS2"/>
<dbReference type="HGNC" id="HGNC:6562">
    <property type="gene designation" value="LGALS2"/>
</dbReference>
<dbReference type="HPA" id="ENSG00000100079">
    <property type="expression patterns" value="Tissue enhanced (gallbladder, intestine, kidney, pancreas)"/>
</dbReference>
<dbReference type="MalaCards" id="LGALS2"/>
<dbReference type="MIM" id="150571">
    <property type="type" value="gene"/>
</dbReference>
<dbReference type="neXtProt" id="NX_P05162"/>
<dbReference type="OpenTargets" id="ENSG00000100079"/>
<dbReference type="PharmGKB" id="PA164741896"/>
<dbReference type="VEuPathDB" id="HostDB:ENSG00000100079"/>
<dbReference type="eggNOG" id="KOG3587">
    <property type="taxonomic scope" value="Eukaryota"/>
</dbReference>
<dbReference type="GeneTree" id="ENSGT00940000155025"/>
<dbReference type="HOGENOM" id="CLU_037794_5_0_1"/>
<dbReference type="InParanoid" id="P05162"/>
<dbReference type="OMA" id="EITNMDM"/>
<dbReference type="OrthoDB" id="8918229at2759"/>
<dbReference type="PAN-GO" id="P05162">
    <property type="GO annotations" value="2 GO annotations based on evolutionary models"/>
</dbReference>
<dbReference type="PhylomeDB" id="P05162"/>
<dbReference type="TreeFam" id="TF315551"/>
<dbReference type="PathwayCommons" id="P05162"/>
<dbReference type="SignaLink" id="P05162"/>
<dbReference type="BioGRID-ORCS" id="3957">
    <property type="hits" value="14 hits in 1149 CRISPR screens"/>
</dbReference>
<dbReference type="ChiTaRS" id="LGALS2">
    <property type="organism name" value="human"/>
</dbReference>
<dbReference type="EvolutionaryTrace" id="P05162"/>
<dbReference type="GeneWiki" id="LGALS2"/>
<dbReference type="GenomeRNAi" id="3957"/>
<dbReference type="Pharos" id="P05162">
    <property type="development level" value="Tbio"/>
</dbReference>
<dbReference type="PRO" id="PR:P05162"/>
<dbReference type="Proteomes" id="UP000005640">
    <property type="component" value="Chromosome 22"/>
</dbReference>
<dbReference type="RNAct" id="P05162">
    <property type="molecule type" value="protein"/>
</dbReference>
<dbReference type="Bgee" id="ENSG00000100079">
    <property type="expression patterns" value="Expressed in gall bladder and 131 other cell types or tissues"/>
</dbReference>
<dbReference type="ExpressionAtlas" id="P05162">
    <property type="expression patterns" value="baseline and differential"/>
</dbReference>
<dbReference type="GO" id="GO:1990724">
    <property type="term" value="C:galectin complex"/>
    <property type="evidence" value="ECO:0000353"/>
    <property type="project" value="ComplexPortal"/>
</dbReference>
<dbReference type="GO" id="GO:0030246">
    <property type="term" value="F:carbohydrate binding"/>
    <property type="evidence" value="ECO:0000318"/>
    <property type="project" value="GO_Central"/>
</dbReference>
<dbReference type="GO" id="GO:0016936">
    <property type="term" value="F:galactoside binding"/>
    <property type="evidence" value="ECO:0000318"/>
    <property type="project" value="GO_Central"/>
</dbReference>
<dbReference type="GO" id="GO:0098609">
    <property type="term" value="P:cell-cell adhesion"/>
    <property type="evidence" value="ECO:0000314"/>
    <property type="project" value="ComplexPortal"/>
</dbReference>
<dbReference type="GO" id="GO:0043065">
    <property type="term" value="P:positive regulation of apoptotic process"/>
    <property type="evidence" value="ECO:0000314"/>
    <property type="project" value="ComplexPortal"/>
</dbReference>
<dbReference type="GO" id="GO:0050729">
    <property type="term" value="P:positive regulation of inflammatory response"/>
    <property type="evidence" value="ECO:0000266"/>
    <property type="project" value="ComplexPortal"/>
</dbReference>
<dbReference type="GO" id="GO:0043029">
    <property type="term" value="P:T cell homeostasis"/>
    <property type="evidence" value="ECO:0000314"/>
    <property type="project" value="ComplexPortal"/>
</dbReference>
<dbReference type="CDD" id="cd00070">
    <property type="entry name" value="GLECT"/>
    <property type="match status" value="1"/>
</dbReference>
<dbReference type="FunFam" id="2.60.120.200:FF:000021">
    <property type="entry name" value="Galectin"/>
    <property type="match status" value="1"/>
</dbReference>
<dbReference type="Gene3D" id="2.60.120.200">
    <property type="match status" value="1"/>
</dbReference>
<dbReference type="InterPro" id="IPR013320">
    <property type="entry name" value="ConA-like_dom_sf"/>
</dbReference>
<dbReference type="InterPro" id="IPR044156">
    <property type="entry name" value="Galectin-like"/>
</dbReference>
<dbReference type="InterPro" id="IPR001079">
    <property type="entry name" value="Galectin_CRD"/>
</dbReference>
<dbReference type="PANTHER" id="PTHR11346">
    <property type="entry name" value="GALECTIN"/>
    <property type="match status" value="1"/>
</dbReference>
<dbReference type="PANTHER" id="PTHR11346:SF104">
    <property type="entry name" value="GALECTIN-2"/>
    <property type="match status" value="1"/>
</dbReference>
<dbReference type="Pfam" id="PF00337">
    <property type="entry name" value="Gal-bind_lectin"/>
    <property type="match status" value="1"/>
</dbReference>
<dbReference type="SMART" id="SM00908">
    <property type="entry name" value="Gal-bind_lectin"/>
    <property type="match status" value="1"/>
</dbReference>
<dbReference type="SMART" id="SM00276">
    <property type="entry name" value="GLECT"/>
    <property type="match status" value="1"/>
</dbReference>
<dbReference type="SUPFAM" id="SSF49899">
    <property type="entry name" value="Concanavalin A-like lectins/glucanases"/>
    <property type="match status" value="1"/>
</dbReference>
<dbReference type="PROSITE" id="PS51304">
    <property type="entry name" value="GALECTIN"/>
    <property type="match status" value="1"/>
</dbReference>
<comment type="function">
    <text>This protein binds beta-galactoside. Its physiological function is not yet known.</text>
</comment>
<comment type="subunit">
    <text>Homodimer.</text>
</comment>
<comment type="interaction">
    <interactant intactId="EBI-7181544">
        <id>P05162</id>
    </interactant>
    <interactant intactId="EBI-741158">
        <id>Q96HA8</id>
        <label>NTAQ1</label>
    </interactant>
    <organismsDiffer>false</organismsDiffer>
    <experiments>3</experiments>
</comment>
<comment type="interaction">
    <interactant intactId="EBI-7181544">
        <id>P05162</id>
    </interactant>
    <interactant intactId="EBI-727004">
        <id>O00560</id>
        <label>SDCBP</label>
    </interactant>
    <organismsDiffer>false</organismsDiffer>
    <experiments>9</experiments>
</comment>
<comment type="interaction">
    <interactant intactId="EBI-7181544">
        <id>P05162</id>
    </interactant>
    <interactant intactId="EBI-742426">
        <id>Q9H190</id>
        <label>SDCBP2</label>
    </interactant>
    <organismsDiffer>false</organismsDiffer>
    <experiments>7</experiments>
</comment>
<comment type="online information" name="Functional Glycomics Gateway - Glycan Binding">
    <link uri="http://www.functionalglycomics.org/glycomics/GBPServlet?&amp;operationType=view&amp;cbpId=cbp_hum_Stlect_280"/>
    <text>Galectin-2</text>
</comment>
<organism>
    <name type="scientific">Homo sapiens</name>
    <name type="common">Human</name>
    <dbReference type="NCBI Taxonomy" id="9606"/>
    <lineage>
        <taxon>Eukaryota</taxon>
        <taxon>Metazoa</taxon>
        <taxon>Chordata</taxon>
        <taxon>Craniata</taxon>
        <taxon>Vertebrata</taxon>
        <taxon>Euteleostomi</taxon>
        <taxon>Mammalia</taxon>
        <taxon>Eutheria</taxon>
        <taxon>Euarchontoglires</taxon>
        <taxon>Primates</taxon>
        <taxon>Haplorrhini</taxon>
        <taxon>Catarrhini</taxon>
        <taxon>Hominidae</taxon>
        <taxon>Homo</taxon>
    </lineage>
</organism>
<sequence>MTGELEVKNMDMKPGSTLKITGSIADGTDGFVINLGQGTDKLNLHFNPRFSESTIVCNSLDGSNWGQEQREDHLCFSPGSEVKFTVTFESDKFKVKLPDGHELTFPNRLGHSHLSYLSVRGGFNMSSFKLKE</sequence>
<reference key="1">
    <citation type="journal article" date="1992" name="J. Biol. Chem.">
        <title>Isolation and expression of a gene encoding L-14-II, a new human soluble lactose-binding lectin.</title>
        <authorList>
            <person name="Gitt M.A."/>
            <person name="Massa S.M."/>
            <person name="Leffler H."/>
            <person name="Barondes S.H."/>
        </authorList>
    </citation>
    <scope>NUCLEOTIDE SEQUENCE [GENOMIC DNA / MRNA]</scope>
</reference>
<reference key="2">
    <citation type="journal article" date="2004" name="Genome Biol.">
        <title>A genome annotation-driven approach to cloning the human ORFeome.</title>
        <authorList>
            <person name="Collins J.E."/>
            <person name="Wright C.L."/>
            <person name="Edwards C.A."/>
            <person name="Davis M.P."/>
            <person name="Grinham J.A."/>
            <person name="Cole C.G."/>
            <person name="Goward M.E."/>
            <person name="Aguado B."/>
            <person name="Mallya M."/>
            <person name="Mokrab Y."/>
            <person name="Huckle E.J."/>
            <person name="Beare D.M."/>
            <person name="Dunham I."/>
        </authorList>
    </citation>
    <scope>NUCLEOTIDE SEQUENCE [LARGE SCALE MRNA]</scope>
</reference>
<reference key="3">
    <citation type="submission" date="2004-06" db="EMBL/GenBank/DDBJ databases">
        <title>Cloning of human full open reading frames in Gateway(TM) system entry vector (pDONR201).</title>
        <authorList>
            <person name="Ebert L."/>
            <person name="Schick M."/>
            <person name="Neubert P."/>
            <person name="Schatten R."/>
            <person name="Henze S."/>
            <person name="Korn B."/>
        </authorList>
    </citation>
    <scope>NUCLEOTIDE SEQUENCE [LARGE SCALE MRNA]</scope>
</reference>
<reference key="4">
    <citation type="journal article" date="1999" name="Nature">
        <title>The DNA sequence of human chromosome 22.</title>
        <authorList>
            <person name="Dunham I."/>
            <person name="Hunt A.R."/>
            <person name="Collins J.E."/>
            <person name="Bruskiewich R."/>
            <person name="Beare D.M."/>
            <person name="Clamp M."/>
            <person name="Smink L.J."/>
            <person name="Ainscough R."/>
            <person name="Almeida J.P."/>
            <person name="Babbage A.K."/>
            <person name="Bagguley C."/>
            <person name="Bailey J."/>
            <person name="Barlow K.F."/>
            <person name="Bates K.N."/>
            <person name="Beasley O.P."/>
            <person name="Bird C.P."/>
            <person name="Blakey S.E."/>
            <person name="Bridgeman A.M."/>
            <person name="Buck D."/>
            <person name="Burgess J."/>
            <person name="Burrill W.D."/>
            <person name="Burton J."/>
            <person name="Carder C."/>
            <person name="Carter N.P."/>
            <person name="Chen Y."/>
            <person name="Clark G."/>
            <person name="Clegg S.M."/>
            <person name="Cobley V.E."/>
            <person name="Cole C.G."/>
            <person name="Collier R.E."/>
            <person name="Connor R."/>
            <person name="Conroy D."/>
            <person name="Corby N.R."/>
            <person name="Coville G.J."/>
            <person name="Cox A.V."/>
            <person name="Davis J."/>
            <person name="Dawson E."/>
            <person name="Dhami P.D."/>
            <person name="Dockree C."/>
            <person name="Dodsworth S.J."/>
            <person name="Durbin R.M."/>
            <person name="Ellington A.G."/>
            <person name="Evans K.L."/>
            <person name="Fey J.M."/>
            <person name="Fleming K."/>
            <person name="French L."/>
            <person name="Garner A.A."/>
            <person name="Gilbert J.G.R."/>
            <person name="Goward M.E."/>
            <person name="Grafham D.V."/>
            <person name="Griffiths M.N.D."/>
            <person name="Hall C."/>
            <person name="Hall R.E."/>
            <person name="Hall-Tamlyn G."/>
            <person name="Heathcott R.W."/>
            <person name="Ho S."/>
            <person name="Holmes S."/>
            <person name="Hunt S.E."/>
            <person name="Jones M.C."/>
            <person name="Kershaw J."/>
            <person name="Kimberley A.M."/>
            <person name="King A."/>
            <person name="Laird G.K."/>
            <person name="Langford C.F."/>
            <person name="Leversha M.A."/>
            <person name="Lloyd C."/>
            <person name="Lloyd D.M."/>
            <person name="Martyn I.D."/>
            <person name="Mashreghi-Mohammadi M."/>
            <person name="Matthews L.H."/>
            <person name="Mccann O.T."/>
            <person name="Mcclay J."/>
            <person name="Mclaren S."/>
            <person name="McMurray A.A."/>
            <person name="Milne S.A."/>
            <person name="Mortimore B.J."/>
            <person name="Odell C.N."/>
            <person name="Pavitt R."/>
            <person name="Pearce A.V."/>
            <person name="Pearson D."/>
            <person name="Phillimore B.J.C.T."/>
            <person name="Phillips S.H."/>
            <person name="Plumb R.W."/>
            <person name="Ramsay H."/>
            <person name="Ramsey Y."/>
            <person name="Rogers L."/>
            <person name="Ross M.T."/>
            <person name="Scott C.E."/>
            <person name="Sehra H.K."/>
            <person name="Skuce C.D."/>
            <person name="Smalley S."/>
            <person name="Smith M.L."/>
            <person name="Soderlund C."/>
            <person name="Spragon L."/>
            <person name="Steward C.A."/>
            <person name="Sulston J.E."/>
            <person name="Swann R.M."/>
            <person name="Vaudin M."/>
            <person name="Wall M."/>
            <person name="Wallis J.M."/>
            <person name="Whiteley M.N."/>
            <person name="Willey D.L."/>
            <person name="Williams L."/>
            <person name="Williams S.A."/>
            <person name="Williamson H."/>
            <person name="Wilmer T.E."/>
            <person name="Wilming L."/>
            <person name="Wright C.L."/>
            <person name="Hubbard T."/>
            <person name="Bentley D.R."/>
            <person name="Beck S."/>
            <person name="Rogers J."/>
            <person name="Shimizu N."/>
            <person name="Minoshima S."/>
            <person name="Kawasaki K."/>
            <person name="Sasaki T."/>
            <person name="Asakawa S."/>
            <person name="Kudoh J."/>
            <person name="Shintani A."/>
            <person name="Shibuya K."/>
            <person name="Yoshizaki Y."/>
            <person name="Aoki N."/>
            <person name="Mitsuyama S."/>
            <person name="Roe B.A."/>
            <person name="Chen F."/>
            <person name="Chu L."/>
            <person name="Crabtree J."/>
            <person name="Deschamps S."/>
            <person name="Do A."/>
            <person name="Do T."/>
            <person name="Dorman A."/>
            <person name="Fang F."/>
            <person name="Fu Y."/>
            <person name="Hu P."/>
            <person name="Hua A."/>
            <person name="Kenton S."/>
            <person name="Lai H."/>
            <person name="Lao H.I."/>
            <person name="Lewis J."/>
            <person name="Lewis S."/>
            <person name="Lin S.-P."/>
            <person name="Loh P."/>
            <person name="Malaj E."/>
            <person name="Nguyen T."/>
            <person name="Pan H."/>
            <person name="Phan S."/>
            <person name="Qi S."/>
            <person name="Qian Y."/>
            <person name="Ray L."/>
            <person name="Ren Q."/>
            <person name="Shaull S."/>
            <person name="Sloan D."/>
            <person name="Song L."/>
            <person name="Wang Q."/>
            <person name="Wang Y."/>
            <person name="Wang Z."/>
            <person name="White J."/>
            <person name="Willingham D."/>
            <person name="Wu H."/>
            <person name="Yao Z."/>
            <person name="Zhan M."/>
            <person name="Zhang G."/>
            <person name="Chissoe S."/>
            <person name="Murray J."/>
            <person name="Miller N."/>
            <person name="Minx P."/>
            <person name="Fulton R."/>
            <person name="Johnson D."/>
            <person name="Bemis G."/>
            <person name="Bentley D."/>
            <person name="Bradshaw H."/>
            <person name="Bourne S."/>
            <person name="Cordes M."/>
            <person name="Du Z."/>
            <person name="Fulton L."/>
            <person name="Goela D."/>
            <person name="Graves T."/>
            <person name="Hawkins J."/>
            <person name="Hinds K."/>
            <person name="Kemp K."/>
            <person name="Latreille P."/>
            <person name="Layman D."/>
            <person name="Ozersky P."/>
            <person name="Rohlfing T."/>
            <person name="Scheet P."/>
            <person name="Walker C."/>
            <person name="Wamsley A."/>
            <person name="Wohldmann P."/>
            <person name="Pepin K."/>
            <person name="Nelson J."/>
            <person name="Korf I."/>
            <person name="Bedell J.A."/>
            <person name="Hillier L.W."/>
            <person name="Mardis E."/>
            <person name="Waterston R."/>
            <person name="Wilson R."/>
            <person name="Emanuel B.S."/>
            <person name="Shaikh T."/>
            <person name="Kurahashi H."/>
            <person name="Saitta S."/>
            <person name="Budarf M.L."/>
            <person name="McDermid H.E."/>
            <person name="Johnson A."/>
            <person name="Wong A.C.C."/>
            <person name="Morrow B.E."/>
            <person name="Edelmann L."/>
            <person name="Kim U.J."/>
            <person name="Shizuya H."/>
            <person name="Simon M.I."/>
            <person name="Dumanski J.P."/>
            <person name="Peyrard M."/>
            <person name="Kedra D."/>
            <person name="Seroussi E."/>
            <person name="Fransson I."/>
            <person name="Tapia I."/>
            <person name="Bruder C.E."/>
            <person name="O'Brien K.P."/>
            <person name="Wilkinson P."/>
            <person name="Bodenteich A."/>
            <person name="Hartman K."/>
            <person name="Hu X."/>
            <person name="Khan A.S."/>
            <person name="Lane L."/>
            <person name="Tilahun Y."/>
            <person name="Wright H."/>
        </authorList>
    </citation>
    <scope>NUCLEOTIDE SEQUENCE [LARGE SCALE GENOMIC DNA]</scope>
</reference>
<reference key="5">
    <citation type="submission" date="2005-07" db="EMBL/GenBank/DDBJ databases">
        <authorList>
            <person name="Mural R.J."/>
            <person name="Istrail S."/>
            <person name="Sutton G.G."/>
            <person name="Florea L."/>
            <person name="Halpern A.L."/>
            <person name="Mobarry C.M."/>
            <person name="Lippert R."/>
            <person name="Walenz B."/>
            <person name="Shatkay H."/>
            <person name="Dew I."/>
            <person name="Miller J.R."/>
            <person name="Flanigan M.J."/>
            <person name="Edwards N.J."/>
            <person name="Bolanos R."/>
            <person name="Fasulo D."/>
            <person name="Halldorsson B.V."/>
            <person name="Hannenhalli S."/>
            <person name="Turner R."/>
            <person name="Yooseph S."/>
            <person name="Lu F."/>
            <person name="Nusskern D.R."/>
            <person name="Shue B.C."/>
            <person name="Zheng X.H."/>
            <person name="Zhong F."/>
            <person name="Delcher A.L."/>
            <person name="Huson D.H."/>
            <person name="Kravitz S.A."/>
            <person name="Mouchard L."/>
            <person name="Reinert K."/>
            <person name="Remington K.A."/>
            <person name="Clark A.G."/>
            <person name="Waterman M.S."/>
            <person name="Eichler E.E."/>
            <person name="Adams M.D."/>
            <person name="Hunkapiller M.W."/>
            <person name="Myers E.W."/>
            <person name="Venter J.C."/>
        </authorList>
    </citation>
    <scope>NUCLEOTIDE SEQUENCE [LARGE SCALE GENOMIC DNA]</scope>
</reference>
<reference key="6">
    <citation type="journal article" date="2004" name="Genome Res.">
        <title>The status, quality, and expansion of the NIH full-length cDNA project: the Mammalian Gene Collection (MGC).</title>
        <authorList>
            <consortium name="The MGC Project Team"/>
        </authorList>
    </citation>
    <scope>NUCLEOTIDE SEQUENCE [LARGE SCALE MRNA]</scope>
    <source>
        <tissue>Colon</tissue>
    </source>
</reference>
<reference key="7">
    <citation type="journal article" date="1991" name="Biochemistry">
        <title>Genomic sequence and organization of two members of a human lectin gene family.</title>
        <authorList>
            <person name="Gitt M.A."/>
            <person name="Barondes S.H."/>
        </authorList>
    </citation>
    <scope>NUCLEOTIDE SEQUENCE OF 4-132</scope>
</reference>
<reference key="8">
    <citation type="journal article" date="1986" name="Proc. Natl. Acad. Sci. U.S.A.">
        <title>Evidence that a human soluble beta-galactoside-binding lectin is encoded by a family of genes.</title>
        <authorList>
            <person name="Gitt M.A."/>
            <person name="Barondes S.H."/>
        </authorList>
    </citation>
    <scope>PRELIMINARY NUCLEOTIDE SEQUENCE [MRNA] OF 6-132</scope>
    <scope>VARIANT ILE-119</scope>
</reference>
<reference key="9">
    <citation type="journal article" date="1993" name="J. Biol. Chem.">
        <title>X-ray crystal structure of the human dimeric S-Lac lectin, L-14-II, in complex with lactose at 2.9-A resolution.</title>
        <authorList>
            <person name="Lobsanov Y.D."/>
            <person name="Gitt M.A."/>
            <person name="Leffler H."/>
            <person name="Barondes S.H."/>
            <person name="Rini J.M."/>
        </authorList>
    </citation>
    <scope>X-RAY CRYSTALLOGRAPHY (2.9 ANGSTROMS)</scope>
</reference>
<reference key="10">
    <citation type="journal article" date="2006" name="Science">
        <title>The consensus coding sequences of human breast and colorectal cancers.</title>
        <authorList>
            <person name="Sjoeblom T."/>
            <person name="Jones S."/>
            <person name="Wood L.D."/>
            <person name="Parsons D.W."/>
            <person name="Lin J."/>
            <person name="Barber T.D."/>
            <person name="Mandelker D."/>
            <person name="Leary R.J."/>
            <person name="Ptak J."/>
            <person name="Silliman N."/>
            <person name="Szabo S."/>
            <person name="Buckhaults P."/>
            <person name="Farrell C."/>
            <person name="Meeh P."/>
            <person name="Markowitz S.D."/>
            <person name="Willis J."/>
            <person name="Dawson D."/>
            <person name="Willson J.K.V."/>
            <person name="Gazdar A.F."/>
            <person name="Hartigan J."/>
            <person name="Wu L."/>
            <person name="Liu C."/>
            <person name="Parmigiani G."/>
            <person name="Park B.H."/>
            <person name="Bachman K.E."/>
            <person name="Papadopoulos N."/>
            <person name="Vogelstein B."/>
            <person name="Kinzler K.W."/>
            <person name="Velculescu V.E."/>
        </authorList>
    </citation>
    <scope>VARIANT [LARGE SCALE ANALYSIS] GLN-132</scope>
</reference>
<gene>
    <name type="primary">LGALS2</name>
</gene>
<protein>
    <recommendedName>
        <fullName>Galectin-2</fullName>
        <shortName>Gal-2</shortName>
    </recommendedName>
    <alternativeName>
        <fullName>Beta-galactoside-binding lectin L-14-II</fullName>
    </alternativeName>
    <alternativeName>
        <fullName>HL14</fullName>
    </alternativeName>
    <alternativeName>
        <fullName>Lactose-binding lectin 2</fullName>
    </alternativeName>
    <alternativeName>
        <fullName>S-Lac lectin 2</fullName>
    </alternativeName>
</protein>